<sequence>MSFIKEFREFAMRGNVIDMAVGVIIGGAFGKIVSSLVADVIMPILSFFTSSVDFKDLHIVLKEATDKTPAMTLKYGMFIQNIFDFIIIAFAIFLMIKALNKLKKEEPKVEKVITPSNEEKLLTEIRDLLKK</sequence>
<reference key="1">
    <citation type="journal article" date="2007" name="J. Bacteriol.">
        <title>Complete genome sequence of Haemophilus somnus (Histophilus somni) strain 129Pt and comparison to Haemophilus ducreyi 35000HP and Haemophilus influenzae Rd.</title>
        <authorList>
            <person name="Challacombe J.F."/>
            <person name="Duncan A.J."/>
            <person name="Brettin T.S."/>
            <person name="Bruce D."/>
            <person name="Chertkov O."/>
            <person name="Detter J.C."/>
            <person name="Han C.S."/>
            <person name="Misra M."/>
            <person name="Richardson P."/>
            <person name="Tapia R."/>
            <person name="Thayer N."/>
            <person name="Xie G."/>
            <person name="Inzana T.J."/>
        </authorList>
    </citation>
    <scope>NUCLEOTIDE SEQUENCE [LARGE SCALE GENOMIC DNA]</scope>
    <source>
        <strain>129Pt</strain>
    </source>
</reference>
<dbReference type="EMBL" id="CP000436">
    <property type="protein sequence ID" value="ABI24318.1"/>
    <property type="molecule type" value="Genomic_DNA"/>
</dbReference>
<dbReference type="SMR" id="Q0I185"/>
<dbReference type="KEGG" id="hso:HS_0037"/>
<dbReference type="eggNOG" id="COG1970">
    <property type="taxonomic scope" value="Bacteria"/>
</dbReference>
<dbReference type="HOGENOM" id="CLU_095787_0_0_6"/>
<dbReference type="GO" id="GO:0005886">
    <property type="term" value="C:plasma membrane"/>
    <property type="evidence" value="ECO:0007669"/>
    <property type="project" value="UniProtKB-SubCell"/>
</dbReference>
<dbReference type="GO" id="GO:0008381">
    <property type="term" value="F:mechanosensitive monoatomic ion channel activity"/>
    <property type="evidence" value="ECO:0007669"/>
    <property type="project" value="UniProtKB-UniRule"/>
</dbReference>
<dbReference type="FunFam" id="1.10.1200.120:FF:000001">
    <property type="entry name" value="Large-conductance mechanosensitive channel"/>
    <property type="match status" value="1"/>
</dbReference>
<dbReference type="Gene3D" id="1.10.1200.120">
    <property type="entry name" value="Large-conductance mechanosensitive channel, MscL, domain 1"/>
    <property type="match status" value="1"/>
</dbReference>
<dbReference type="HAMAP" id="MF_00115">
    <property type="entry name" value="MscL"/>
    <property type="match status" value="1"/>
</dbReference>
<dbReference type="InterPro" id="IPR019823">
    <property type="entry name" value="Mechanosensitive_channel_CS"/>
</dbReference>
<dbReference type="InterPro" id="IPR001185">
    <property type="entry name" value="MS_channel"/>
</dbReference>
<dbReference type="InterPro" id="IPR037673">
    <property type="entry name" value="MSC/AndL"/>
</dbReference>
<dbReference type="InterPro" id="IPR036019">
    <property type="entry name" value="MscL_channel"/>
</dbReference>
<dbReference type="NCBIfam" id="TIGR00220">
    <property type="entry name" value="mscL"/>
    <property type="match status" value="1"/>
</dbReference>
<dbReference type="NCBIfam" id="NF001843">
    <property type="entry name" value="PRK00567.1-4"/>
    <property type="match status" value="1"/>
</dbReference>
<dbReference type="PANTHER" id="PTHR30266:SF2">
    <property type="entry name" value="LARGE-CONDUCTANCE MECHANOSENSITIVE CHANNEL"/>
    <property type="match status" value="1"/>
</dbReference>
<dbReference type="PANTHER" id="PTHR30266">
    <property type="entry name" value="MECHANOSENSITIVE CHANNEL MSCL"/>
    <property type="match status" value="1"/>
</dbReference>
<dbReference type="Pfam" id="PF01741">
    <property type="entry name" value="MscL"/>
    <property type="match status" value="1"/>
</dbReference>
<dbReference type="PRINTS" id="PR01264">
    <property type="entry name" value="MECHCHANNEL"/>
</dbReference>
<dbReference type="SUPFAM" id="SSF81330">
    <property type="entry name" value="Gated mechanosensitive channel"/>
    <property type="match status" value="1"/>
</dbReference>
<dbReference type="PROSITE" id="PS01327">
    <property type="entry name" value="MSCL"/>
    <property type="match status" value="1"/>
</dbReference>
<organism>
    <name type="scientific">Histophilus somni (strain 129Pt)</name>
    <name type="common">Haemophilus somnus</name>
    <dbReference type="NCBI Taxonomy" id="205914"/>
    <lineage>
        <taxon>Bacteria</taxon>
        <taxon>Pseudomonadati</taxon>
        <taxon>Pseudomonadota</taxon>
        <taxon>Gammaproteobacteria</taxon>
        <taxon>Pasteurellales</taxon>
        <taxon>Pasteurellaceae</taxon>
        <taxon>Histophilus</taxon>
    </lineage>
</organism>
<protein>
    <recommendedName>
        <fullName evidence="1">Large-conductance mechanosensitive channel</fullName>
    </recommendedName>
</protein>
<name>MSCL_HISS1</name>
<comment type="function">
    <text evidence="1">Channel that opens in response to stretch forces in the membrane lipid bilayer. May participate in the regulation of osmotic pressure changes within the cell.</text>
</comment>
<comment type="subunit">
    <text evidence="1">Homopentamer.</text>
</comment>
<comment type="subcellular location">
    <subcellularLocation>
        <location evidence="1">Cell inner membrane</location>
        <topology evidence="1">Multi-pass membrane protein</topology>
    </subcellularLocation>
</comment>
<comment type="similarity">
    <text evidence="1">Belongs to the MscL family.</text>
</comment>
<gene>
    <name evidence="1" type="primary">mscL</name>
    <name type="ordered locus">HS_0037</name>
</gene>
<evidence type="ECO:0000255" key="1">
    <source>
        <dbReference type="HAMAP-Rule" id="MF_00115"/>
    </source>
</evidence>
<proteinExistence type="inferred from homology"/>
<feature type="chain" id="PRO_1000015383" description="Large-conductance mechanosensitive channel">
    <location>
        <begin position="1"/>
        <end position="131"/>
    </location>
</feature>
<feature type="transmembrane region" description="Helical" evidence="1">
    <location>
        <begin position="21"/>
        <end position="41"/>
    </location>
</feature>
<feature type="transmembrane region" description="Helical" evidence="1">
    <location>
        <begin position="76"/>
        <end position="96"/>
    </location>
</feature>
<accession>Q0I185</accession>
<keyword id="KW-0997">Cell inner membrane</keyword>
<keyword id="KW-1003">Cell membrane</keyword>
<keyword id="KW-0407">Ion channel</keyword>
<keyword id="KW-0406">Ion transport</keyword>
<keyword id="KW-0472">Membrane</keyword>
<keyword id="KW-0812">Transmembrane</keyword>
<keyword id="KW-1133">Transmembrane helix</keyword>
<keyword id="KW-0813">Transport</keyword>